<accession>D3JWK6</accession>
<reference key="1">
    <citation type="journal article" date="2011" name="Toxicon">
        <title>Diversity of conotoxin types from Conus californicus reflects a diversity of prey types and a novel evolutionary history.</title>
        <authorList>
            <person name="Elliger C.A."/>
            <person name="Richmond T.A."/>
            <person name="Lebaric Z.N."/>
            <person name="Pierce N.T."/>
            <person name="Sweedler J.V."/>
            <person name="Gilly W.F."/>
        </authorList>
    </citation>
    <scope>NUCLEOTIDE SEQUENCE [MRNA]</scope>
    <source>
        <tissue>Venom duct</tissue>
    </source>
</reference>
<comment type="function">
    <text evidence="2">Probable neurotoxin with unknown target. Possibly targets ion channels.</text>
</comment>
<comment type="subcellular location">
    <subcellularLocation>
        <location evidence="3">Secreted</location>
    </subcellularLocation>
</comment>
<comment type="tissue specificity">
    <text evidence="3">Expressed by the venom duct.</text>
</comment>
<comment type="domain">
    <text>The cysteine framework is XXII (C-C-C-C-C-C-C-C).</text>
</comment>
<comment type="PTM">
    <text evidence="2">Contains 4 disulfide bonds.</text>
</comment>
<proteinExistence type="evidence at transcript level"/>
<evidence type="ECO:0000303" key="1">
    <source>
    </source>
</evidence>
<evidence type="ECO:0000305" key="2"/>
<evidence type="ECO:0000305" key="3">
    <source>
    </source>
</evidence>
<feature type="propeptide" id="PRO_0000414940" evidence="3">
    <location>
        <begin position="1" status="less than"/>
        <end position="5"/>
    </location>
</feature>
<feature type="peptide" id="PRO_5000666524" description="Conotoxin Cal22e" evidence="3">
    <location>
        <begin position="7"/>
        <end position="51"/>
    </location>
</feature>
<feature type="non-terminal residue">
    <location>
        <position position="1"/>
    </location>
</feature>
<name>CUME_CONCL</name>
<dbReference type="EMBL" id="GU324078">
    <property type="protein sequence ID" value="ADB95950.1"/>
    <property type="molecule type" value="mRNA"/>
</dbReference>
<dbReference type="ConoServer" id="4053">
    <property type="toxin name" value="Cal22e precursor"/>
</dbReference>
<dbReference type="GO" id="GO:0005576">
    <property type="term" value="C:extracellular region"/>
    <property type="evidence" value="ECO:0007669"/>
    <property type="project" value="UniProtKB-SubCell"/>
</dbReference>
<dbReference type="GO" id="GO:0099106">
    <property type="term" value="F:ion channel regulator activity"/>
    <property type="evidence" value="ECO:0007669"/>
    <property type="project" value="UniProtKB-KW"/>
</dbReference>
<dbReference type="GO" id="GO:0090729">
    <property type="term" value="F:toxin activity"/>
    <property type="evidence" value="ECO:0007669"/>
    <property type="project" value="UniProtKB-KW"/>
</dbReference>
<keyword id="KW-1015">Disulfide bond</keyword>
<keyword id="KW-0872">Ion channel impairing toxin</keyword>
<keyword id="KW-0528">Neurotoxin</keyword>
<keyword id="KW-0964">Secreted</keyword>
<keyword id="KW-0800">Toxin</keyword>
<organism>
    <name type="scientific">Californiconus californicus</name>
    <name type="common">California cone</name>
    <name type="synonym">Conus californicus</name>
    <dbReference type="NCBI Taxonomy" id="1736779"/>
    <lineage>
        <taxon>Eukaryota</taxon>
        <taxon>Metazoa</taxon>
        <taxon>Spiralia</taxon>
        <taxon>Lophotrochozoa</taxon>
        <taxon>Mollusca</taxon>
        <taxon>Gastropoda</taxon>
        <taxon>Caenogastropoda</taxon>
        <taxon>Neogastropoda</taxon>
        <taxon>Conoidea</taxon>
        <taxon>Conidae</taxon>
        <taxon>Californiconus</taxon>
    </lineage>
</organism>
<sequence length="53" mass="5916">GRPSARYDAPYCSEEELQACDCSHNPVRDACQCAYDPAGSPACDCYCVEPWRR</sequence>
<protein>
    <recommendedName>
        <fullName evidence="1">Conotoxin Cal22e</fullName>
    </recommendedName>
</protein>